<gene>
    <name evidence="1" type="primary">tdh</name>
    <name type="ordered locus">FTW_1528</name>
</gene>
<proteinExistence type="inferred from homology"/>
<comment type="function">
    <text evidence="1">Catalyzes the NAD(+)-dependent oxidation of L-threonine to 2-amino-3-ketobutyrate.</text>
</comment>
<comment type="catalytic activity">
    <reaction evidence="1">
        <text>L-threonine + NAD(+) = (2S)-2-amino-3-oxobutanoate + NADH + H(+)</text>
        <dbReference type="Rhea" id="RHEA:13161"/>
        <dbReference type="ChEBI" id="CHEBI:15378"/>
        <dbReference type="ChEBI" id="CHEBI:57540"/>
        <dbReference type="ChEBI" id="CHEBI:57926"/>
        <dbReference type="ChEBI" id="CHEBI:57945"/>
        <dbReference type="ChEBI" id="CHEBI:78948"/>
        <dbReference type="EC" id="1.1.1.103"/>
    </reaction>
</comment>
<comment type="cofactor">
    <cofactor evidence="1">
        <name>Zn(2+)</name>
        <dbReference type="ChEBI" id="CHEBI:29105"/>
    </cofactor>
    <text evidence="1">Binds 2 Zn(2+) ions per subunit.</text>
</comment>
<comment type="pathway">
    <text evidence="1">Amino-acid degradation; L-threonine degradation via oxydo-reductase pathway; glycine from L-threonine: step 1/2.</text>
</comment>
<comment type="subunit">
    <text evidence="1">Homotetramer.</text>
</comment>
<comment type="subcellular location">
    <subcellularLocation>
        <location evidence="1">Cytoplasm</location>
    </subcellularLocation>
</comment>
<comment type="similarity">
    <text evidence="1">Belongs to the zinc-containing alcohol dehydrogenase family.</text>
</comment>
<organism>
    <name type="scientific">Francisella tularensis subsp. tularensis (strain WY96-3418)</name>
    <dbReference type="NCBI Taxonomy" id="418136"/>
    <lineage>
        <taxon>Bacteria</taxon>
        <taxon>Pseudomonadati</taxon>
        <taxon>Pseudomonadota</taxon>
        <taxon>Gammaproteobacteria</taxon>
        <taxon>Thiotrichales</taxon>
        <taxon>Francisellaceae</taxon>
        <taxon>Francisella</taxon>
    </lineage>
</organism>
<dbReference type="EC" id="1.1.1.103" evidence="1"/>
<dbReference type="EMBL" id="CP000608">
    <property type="protein sequence ID" value="ABO47243.1"/>
    <property type="molecule type" value="Genomic_DNA"/>
</dbReference>
<dbReference type="RefSeq" id="WP_003020520.1">
    <property type="nucleotide sequence ID" value="NC_009257.1"/>
</dbReference>
<dbReference type="SMR" id="A4IZ92"/>
<dbReference type="KEGG" id="ftw:FTW_1528"/>
<dbReference type="HOGENOM" id="CLU_026673_11_0_6"/>
<dbReference type="UniPathway" id="UPA00046">
    <property type="reaction ID" value="UER00505"/>
</dbReference>
<dbReference type="GO" id="GO:0005737">
    <property type="term" value="C:cytoplasm"/>
    <property type="evidence" value="ECO:0007669"/>
    <property type="project" value="UniProtKB-SubCell"/>
</dbReference>
<dbReference type="GO" id="GO:0008743">
    <property type="term" value="F:L-threonine 3-dehydrogenase activity"/>
    <property type="evidence" value="ECO:0007669"/>
    <property type="project" value="UniProtKB-UniRule"/>
</dbReference>
<dbReference type="GO" id="GO:0008270">
    <property type="term" value="F:zinc ion binding"/>
    <property type="evidence" value="ECO:0007669"/>
    <property type="project" value="UniProtKB-UniRule"/>
</dbReference>
<dbReference type="GO" id="GO:0019518">
    <property type="term" value="P:L-threonine catabolic process to glycine"/>
    <property type="evidence" value="ECO:0007669"/>
    <property type="project" value="UniProtKB-UniPathway"/>
</dbReference>
<dbReference type="Gene3D" id="3.90.180.10">
    <property type="entry name" value="Medium-chain alcohol dehydrogenases, catalytic domain"/>
    <property type="match status" value="1"/>
</dbReference>
<dbReference type="Gene3D" id="3.40.50.720">
    <property type="entry name" value="NAD(P)-binding Rossmann-like Domain"/>
    <property type="match status" value="1"/>
</dbReference>
<dbReference type="HAMAP" id="MF_00627">
    <property type="entry name" value="Thr_dehydrog"/>
    <property type="match status" value="1"/>
</dbReference>
<dbReference type="InterPro" id="IPR013149">
    <property type="entry name" value="ADH-like_C"/>
</dbReference>
<dbReference type="InterPro" id="IPR013154">
    <property type="entry name" value="ADH-like_N"/>
</dbReference>
<dbReference type="InterPro" id="IPR002328">
    <property type="entry name" value="ADH_Zn_CS"/>
</dbReference>
<dbReference type="InterPro" id="IPR011032">
    <property type="entry name" value="GroES-like_sf"/>
</dbReference>
<dbReference type="InterPro" id="IPR004627">
    <property type="entry name" value="L-Threonine_3-DHase"/>
</dbReference>
<dbReference type="InterPro" id="IPR036291">
    <property type="entry name" value="NAD(P)-bd_dom_sf"/>
</dbReference>
<dbReference type="InterPro" id="IPR050129">
    <property type="entry name" value="Zn_alcohol_dh"/>
</dbReference>
<dbReference type="NCBIfam" id="NF003808">
    <property type="entry name" value="PRK05396.1"/>
    <property type="match status" value="1"/>
</dbReference>
<dbReference type="NCBIfam" id="TIGR00692">
    <property type="entry name" value="tdh"/>
    <property type="match status" value="1"/>
</dbReference>
<dbReference type="PANTHER" id="PTHR43401">
    <property type="entry name" value="L-THREONINE 3-DEHYDROGENASE"/>
    <property type="match status" value="1"/>
</dbReference>
<dbReference type="PANTHER" id="PTHR43401:SF2">
    <property type="entry name" value="L-THREONINE 3-DEHYDROGENASE"/>
    <property type="match status" value="1"/>
</dbReference>
<dbReference type="Pfam" id="PF08240">
    <property type="entry name" value="ADH_N"/>
    <property type="match status" value="1"/>
</dbReference>
<dbReference type="Pfam" id="PF00107">
    <property type="entry name" value="ADH_zinc_N"/>
    <property type="match status" value="1"/>
</dbReference>
<dbReference type="SUPFAM" id="SSF50129">
    <property type="entry name" value="GroES-like"/>
    <property type="match status" value="1"/>
</dbReference>
<dbReference type="SUPFAM" id="SSF51735">
    <property type="entry name" value="NAD(P)-binding Rossmann-fold domains"/>
    <property type="match status" value="1"/>
</dbReference>
<dbReference type="PROSITE" id="PS00059">
    <property type="entry name" value="ADH_ZINC"/>
    <property type="match status" value="1"/>
</dbReference>
<feature type="chain" id="PRO_1000051641" description="L-threonine 3-dehydrogenase">
    <location>
        <begin position="1"/>
        <end position="351"/>
    </location>
</feature>
<feature type="active site" description="Charge relay system" evidence="1">
    <location>
        <position position="41"/>
    </location>
</feature>
<feature type="active site" description="Charge relay system" evidence="1">
    <location>
        <position position="44"/>
    </location>
</feature>
<feature type="binding site" evidence="1">
    <location>
        <position position="39"/>
    </location>
    <ligand>
        <name>Zn(2+)</name>
        <dbReference type="ChEBI" id="CHEBI:29105"/>
        <label>1</label>
        <note>catalytic</note>
    </ligand>
</feature>
<feature type="binding site" evidence="1">
    <location>
        <position position="64"/>
    </location>
    <ligand>
        <name>Zn(2+)</name>
        <dbReference type="ChEBI" id="CHEBI:29105"/>
        <label>1</label>
        <note>catalytic</note>
    </ligand>
</feature>
<feature type="binding site" evidence="1">
    <location>
        <position position="65"/>
    </location>
    <ligand>
        <name>Zn(2+)</name>
        <dbReference type="ChEBI" id="CHEBI:29105"/>
        <label>1</label>
        <note>catalytic</note>
    </ligand>
</feature>
<feature type="binding site" evidence="1">
    <location>
        <position position="94"/>
    </location>
    <ligand>
        <name>Zn(2+)</name>
        <dbReference type="ChEBI" id="CHEBI:29105"/>
        <label>2</label>
    </ligand>
</feature>
<feature type="binding site" evidence="1">
    <location>
        <position position="97"/>
    </location>
    <ligand>
        <name>Zn(2+)</name>
        <dbReference type="ChEBI" id="CHEBI:29105"/>
        <label>2</label>
    </ligand>
</feature>
<feature type="binding site" evidence="1">
    <location>
        <position position="100"/>
    </location>
    <ligand>
        <name>Zn(2+)</name>
        <dbReference type="ChEBI" id="CHEBI:29105"/>
        <label>2</label>
    </ligand>
</feature>
<feature type="binding site" evidence="1">
    <location>
        <position position="108"/>
    </location>
    <ligand>
        <name>Zn(2+)</name>
        <dbReference type="ChEBI" id="CHEBI:29105"/>
        <label>2</label>
    </ligand>
</feature>
<feature type="binding site" evidence="1">
    <location>
        <position position="176"/>
    </location>
    <ligand>
        <name>NAD(+)</name>
        <dbReference type="ChEBI" id="CHEBI:57540"/>
    </ligand>
</feature>
<feature type="binding site" evidence="1">
    <location>
        <position position="196"/>
    </location>
    <ligand>
        <name>NAD(+)</name>
        <dbReference type="ChEBI" id="CHEBI:57540"/>
    </ligand>
</feature>
<feature type="binding site" evidence="1">
    <location>
        <position position="201"/>
    </location>
    <ligand>
        <name>NAD(+)</name>
        <dbReference type="ChEBI" id="CHEBI:57540"/>
    </ligand>
</feature>
<feature type="binding site" evidence="1">
    <location>
        <begin position="271"/>
        <end position="273"/>
    </location>
    <ligand>
        <name>NAD(+)</name>
        <dbReference type="ChEBI" id="CHEBI:57540"/>
    </ligand>
</feature>
<feature type="binding site" evidence="1">
    <location>
        <begin position="295"/>
        <end position="296"/>
    </location>
    <ligand>
        <name>NAD(+)</name>
        <dbReference type="ChEBI" id="CHEBI:57540"/>
    </ligand>
</feature>
<feature type="site" description="Important for catalytic activity for the proton relay mechanism but does not participate directly in the coordination of zinc atom" evidence="1">
    <location>
        <position position="149"/>
    </location>
</feature>
<sequence>MKALAKLKKQPGIWIINDAPIPEYGYNDVLIKIKKTAICGTDLHIYNWDKWSQNTIPVPMITGHEFAGEVVAKGDGVTSVDIGDRVSGEGHLVCGQCRNCRAGKRHLCRKTIGIGVNVQGAFAEYLVMPAVNVFKIPDSISDDIASTFDPMGNAIHTALSFNLTGEDVLITGAGPIGLMAVKIARFCGARRIVITDINEYRLQMARDFGATVALNVAPFKNQDELVKQMRKVMSDIGMTEGFDVGLEMSGINSAISMMLDVMNHGGKLSLLGISAGDISVDWGAILFKGLTLKGIYGREMFETWYLMTSMLQAGMDMNPIITHRLHIDEFQKGFEIMKSGQCGKVILDWSS</sequence>
<protein>
    <recommendedName>
        <fullName evidence="1">L-threonine 3-dehydrogenase</fullName>
        <shortName evidence="1">TDH</shortName>
        <ecNumber evidence="1">1.1.1.103</ecNumber>
    </recommendedName>
</protein>
<name>TDH_FRATW</name>
<reference key="1">
    <citation type="journal article" date="2007" name="PLoS ONE">
        <title>Complete genomic characterization of a pathogenic A.II strain of Francisella tularensis subspecies tularensis.</title>
        <authorList>
            <person name="Beckstrom-Sternberg S.M."/>
            <person name="Auerbach R.K."/>
            <person name="Godbole S."/>
            <person name="Pearson J.V."/>
            <person name="Beckstrom-Sternberg J.S."/>
            <person name="Deng Z."/>
            <person name="Munk C."/>
            <person name="Kubota K."/>
            <person name="Zhou Y."/>
            <person name="Bruce D."/>
            <person name="Noronha J."/>
            <person name="Scheuermann R.H."/>
            <person name="Wang A."/>
            <person name="Wei X."/>
            <person name="Wang J."/>
            <person name="Hao J."/>
            <person name="Wagner D.M."/>
            <person name="Brettin T.S."/>
            <person name="Brown N."/>
            <person name="Gilna P."/>
            <person name="Keim P.S."/>
        </authorList>
    </citation>
    <scope>NUCLEOTIDE SEQUENCE [LARGE SCALE GENOMIC DNA]</scope>
    <source>
        <strain>WY96-3418</strain>
    </source>
</reference>
<accession>A4IZ92</accession>
<keyword id="KW-0963">Cytoplasm</keyword>
<keyword id="KW-0479">Metal-binding</keyword>
<keyword id="KW-0520">NAD</keyword>
<keyword id="KW-0560">Oxidoreductase</keyword>
<keyword id="KW-0862">Zinc</keyword>
<evidence type="ECO:0000255" key="1">
    <source>
        <dbReference type="HAMAP-Rule" id="MF_00627"/>
    </source>
</evidence>